<feature type="chain" id="PRO_0000330106" description="Mitochondrial division protein 1">
    <location>
        <begin position="1"/>
        <end position="705"/>
    </location>
</feature>
<feature type="repeat" description="WD 1">
    <location>
        <begin position="395"/>
        <end position="435"/>
    </location>
</feature>
<feature type="repeat" description="WD 2">
    <location>
        <begin position="438"/>
        <end position="476"/>
    </location>
</feature>
<feature type="repeat" description="WD 3">
    <location>
        <begin position="492"/>
        <end position="529"/>
    </location>
</feature>
<feature type="repeat" description="WD 4">
    <location>
        <begin position="547"/>
        <end position="594"/>
    </location>
</feature>
<feature type="repeat" description="WD 5">
    <location>
        <begin position="595"/>
        <end position="632"/>
    </location>
</feature>
<feature type="repeat" description="WD 6">
    <location>
        <begin position="634"/>
        <end position="671"/>
    </location>
</feature>
<feature type="repeat" description="WD 7">
    <location>
        <begin position="676"/>
        <end position="705"/>
    </location>
</feature>
<feature type="region of interest" description="Disordered" evidence="3">
    <location>
        <begin position="110"/>
        <end position="136"/>
    </location>
</feature>
<feature type="region of interest" description="Disordered" evidence="3">
    <location>
        <begin position="290"/>
        <end position="310"/>
    </location>
</feature>
<feature type="region of interest" description="Disordered" evidence="3">
    <location>
        <begin position="342"/>
        <end position="369"/>
    </location>
</feature>
<feature type="coiled-coil region" evidence="2">
    <location>
        <begin position="216"/>
        <end position="250"/>
    </location>
</feature>
<feature type="compositionally biased region" description="Basic and acidic residues" evidence="3">
    <location>
        <begin position="125"/>
        <end position="136"/>
    </location>
</feature>
<feature type="compositionally biased region" description="Basic and acidic residues" evidence="3">
    <location>
        <begin position="342"/>
        <end position="351"/>
    </location>
</feature>
<gene>
    <name type="primary">MDV1</name>
    <name type="ordered locus">KLLA0F21406g</name>
</gene>
<organism>
    <name type="scientific">Kluyveromyces lactis (strain ATCC 8585 / CBS 2359 / DSM 70799 / NBRC 1267 / NRRL Y-1140 / WM37)</name>
    <name type="common">Yeast</name>
    <name type="synonym">Candida sphaerica</name>
    <dbReference type="NCBI Taxonomy" id="284590"/>
    <lineage>
        <taxon>Eukaryota</taxon>
        <taxon>Fungi</taxon>
        <taxon>Dikarya</taxon>
        <taxon>Ascomycota</taxon>
        <taxon>Saccharomycotina</taxon>
        <taxon>Saccharomycetes</taxon>
        <taxon>Saccharomycetales</taxon>
        <taxon>Saccharomycetaceae</taxon>
        <taxon>Kluyveromyces</taxon>
    </lineage>
</organism>
<dbReference type="EMBL" id="CR382126">
    <property type="protein sequence ID" value="CAG98747.1"/>
    <property type="molecule type" value="Genomic_DNA"/>
</dbReference>
<dbReference type="RefSeq" id="XP_456039.1">
    <property type="nucleotide sequence ID" value="XM_456039.1"/>
</dbReference>
<dbReference type="SMR" id="Q6CJ50"/>
<dbReference type="FunCoup" id="Q6CJ50">
    <property type="interactions" value="66"/>
</dbReference>
<dbReference type="STRING" id="284590.Q6CJ50"/>
<dbReference type="PaxDb" id="284590-Q6CJ50"/>
<dbReference type="KEGG" id="kla:KLLA0_F21406g"/>
<dbReference type="eggNOG" id="KOG4155">
    <property type="taxonomic scope" value="Eukaryota"/>
</dbReference>
<dbReference type="HOGENOM" id="CLU_012350_1_0_1"/>
<dbReference type="InParanoid" id="Q6CJ50"/>
<dbReference type="OMA" id="ERLRYMD"/>
<dbReference type="Proteomes" id="UP000000598">
    <property type="component" value="Chromosome F"/>
</dbReference>
<dbReference type="GO" id="GO:0005741">
    <property type="term" value="C:mitochondrial outer membrane"/>
    <property type="evidence" value="ECO:0007669"/>
    <property type="project" value="UniProtKB-SubCell"/>
</dbReference>
<dbReference type="CDD" id="cd22881">
    <property type="entry name" value="Mdv1_N"/>
    <property type="match status" value="1"/>
</dbReference>
<dbReference type="CDD" id="cd00200">
    <property type="entry name" value="WD40"/>
    <property type="match status" value="1"/>
</dbReference>
<dbReference type="Gene3D" id="6.10.280.220">
    <property type="match status" value="1"/>
</dbReference>
<dbReference type="Gene3D" id="2.130.10.10">
    <property type="entry name" value="YVTN repeat-like/Quinoprotein amine dehydrogenase"/>
    <property type="match status" value="2"/>
</dbReference>
<dbReference type="InterPro" id="IPR020472">
    <property type="entry name" value="G-protein_beta_WD-40_rep"/>
</dbReference>
<dbReference type="InterPro" id="IPR015943">
    <property type="entry name" value="WD40/YVTN_repeat-like_dom_sf"/>
</dbReference>
<dbReference type="InterPro" id="IPR019775">
    <property type="entry name" value="WD40_repeat_CS"/>
</dbReference>
<dbReference type="InterPro" id="IPR036322">
    <property type="entry name" value="WD40_repeat_dom_sf"/>
</dbReference>
<dbReference type="InterPro" id="IPR001680">
    <property type="entry name" value="WD40_rpt"/>
</dbReference>
<dbReference type="PANTHER" id="PTHR19848:SF8">
    <property type="entry name" value="F-BOX AND WD REPEAT DOMAIN CONTAINING 7"/>
    <property type="match status" value="1"/>
</dbReference>
<dbReference type="PANTHER" id="PTHR19848">
    <property type="entry name" value="WD40 REPEAT PROTEIN"/>
    <property type="match status" value="1"/>
</dbReference>
<dbReference type="Pfam" id="PF00400">
    <property type="entry name" value="WD40"/>
    <property type="match status" value="4"/>
</dbReference>
<dbReference type="PRINTS" id="PR00320">
    <property type="entry name" value="GPROTEINBRPT"/>
</dbReference>
<dbReference type="SMART" id="SM00320">
    <property type="entry name" value="WD40"/>
    <property type="match status" value="6"/>
</dbReference>
<dbReference type="SUPFAM" id="SSF50978">
    <property type="entry name" value="WD40 repeat-like"/>
    <property type="match status" value="1"/>
</dbReference>
<dbReference type="PROSITE" id="PS00678">
    <property type="entry name" value="WD_REPEATS_1"/>
    <property type="match status" value="4"/>
</dbReference>
<dbReference type="PROSITE" id="PS50082">
    <property type="entry name" value="WD_REPEATS_2"/>
    <property type="match status" value="5"/>
</dbReference>
<dbReference type="PROSITE" id="PS50294">
    <property type="entry name" value="WD_REPEATS_REGION"/>
    <property type="match status" value="1"/>
</dbReference>
<evidence type="ECO:0000250" key="1"/>
<evidence type="ECO:0000255" key="2"/>
<evidence type="ECO:0000256" key="3">
    <source>
        <dbReference type="SAM" id="MobiDB-lite"/>
    </source>
</evidence>
<evidence type="ECO:0000305" key="4"/>
<comment type="function">
    <text evidence="1">Involved in mitochondrial fission. Acts as an adapter protein required to form mitochondrial fission complexes. Formation of these complexes is required to promote constriction and fission of the mitochondrial compartment at a late step in mitochondrial division (By similarity).</text>
</comment>
<comment type="subcellular location">
    <subcellularLocation>
        <location evidence="1">Mitochondrion outer membrane</location>
        <topology evidence="1">Peripheral membrane protein</topology>
        <orientation evidence="1">Cytoplasmic side</orientation>
    </subcellularLocation>
</comment>
<comment type="similarity">
    <text evidence="4">Belongs to the WD repeat MDV1/CAF4 family.</text>
</comment>
<name>MDV1_KLULA</name>
<reference key="1">
    <citation type="journal article" date="2004" name="Nature">
        <title>Genome evolution in yeasts.</title>
        <authorList>
            <person name="Dujon B."/>
            <person name="Sherman D."/>
            <person name="Fischer G."/>
            <person name="Durrens P."/>
            <person name="Casaregola S."/>
            <person name="Lafontaine I."/>
            <person name="de Montigny J."/>
            <person name="Marck C."/>
            <person name="Neuveglise C."/>
            <person name="Talla E."/>
            <person name="Goffard N."/>
            <person name="Frangeul L."/>
            <person name="Aigle M."/>
            <person name="Anthouard V."/>
            <person name="Babour A."/>
            <person name="Barbe V."/>
            <person name="Barnay S."/>
            <person name="Blanchin S."/>
            <person name="Beckerich J.-M."/>
            <person name="Beyne E."/>
            <person name="Bleykasten C."/>
            <person name="Boisrame A."/>
            <person name="Boyer J."/>
            <person name="Cattolico L."/>
            <person name="Confanioleri F."/>
            <person name="de Daruvar A."/>
            <person name="Despons L."/>
            <person name="Fabre E."/>
            <person name="Fairhead C."/>
            <person name="Ferry-Dumazet H."/>
            <person name="Groppi A."/>
            <person name="Hantraye F."/>
            <person name="Hennequin C."/>
            <person name="Jauniaux N."/>
            <person name="Joyet P."/>
            <person name="Kachouri R."/>
            <person name="Kerrest A."/>
            <person name="Koszul R."/>
            <person name="Lemaire M."/>
            <person name="Lesur I."/>
            <person name="Ma L."/>
            <person name="Muller H."/>
            <person name="Nicaud J.-M."/>
            <person name="Nikolski M."/>
            <person name="Oztas S."/>
            <person name="Ozier-Kalogeropoulos O."/>
            <person name="Pellenz S."/>
            <person name="Potier S."/>
            <person name="Richard G.-F."/>
            <person name="Straub M.-L."/>
            <person name="Suleau A."/>
            <person name="Swennen D."/>
            <person name="Tekaia F."/>
            <person name="Wesolowski-Louvel M."/>
            <person name="Westhof E."/>
            <person name="Wirth B."/>
            <person name="Zeniou-Meyer M."/>
            <person name="Zivanovic Y."/>
            <person name="Bolotin-Fukuhara M."/>
            <person name="Thierry A."/>
            <person name="Bouchier C."/>
            <person name="Caudron B."/>
            <person name="Scarpelli C."/>
            <person name="Gaillardin C."/>
            <person name="Weissenbach J."/>
            <person name="Wincker P."/>
            <person name="Souciet J.-L."/>
        </authorList>
    </citation>
    <scope>NUCLEOTIDE SEQUENCE [LARGE SCALE GENOMIC DNA]</scope>
    <source>
        <strain>ATCC 8585 / CBS 2359 / DSM 70799 / NBRC 1267 / NRRL Y-1140 / WM37</strain>
    </source>
</reference>
<keyword id="KW-0175">Coiled coil</keyword>
<keyword id="KW-0472">Membrane</keyword>
<keyword id="KW-0496">Mitochondrion</keyword>
<keyword id="KW-1000">Mitochondrion outer membrane</keyword>
<keyword id="KW-1185">Reference proteome</keyword>
<keyword id="KW-0677">Repeat</keyword>
<keyword id="KW-0853">WD repeat</keyword>
<sequence length="705" mass="79490">MSSNTGDQFANLGKALSTTASVLFSSQPMEDTILSYSSPYKKLLHETITNAGGGSSLVKVRHDVKLSKGKNTGFQDIYSNSKEFFKNSYSDPKTTFKVLSYLSDDLLEDAPRDTIPQNKNMITENGEKRSAKSKKQEPTLFQGFEASLPVINETIELQQKLIMNSDMKPLTDSESIPVYAEEEEQEEEFSLPDHLKADKLLHSYSASFLKDASRSITDNLDLLEIQKNLAASEIRELDIKLEKLKMMRELVFKRVAKIEQHELFLEKHLNNVKDRIDMIIEYNMDKEYSSEDEENINGLSELSPKTGETNETYETAATTPLENKEEEHSPLLSKSIYQQLQDHEKKSDISERKKHSTSKKIKDVGVSHRNRRRKTYPTLQQFYDSGSKITSLPKAHDEDITCLDFDMPFGTMCSAGSLDHSVKVWDLSKKKQIATLHGHLASISCMQIDQYSTLITGGRDAVLKLWDIDKAMADEASNSSEDNDACLYTFDSHVDEITAISFDGDNLVSGSQDRTVRQWDLNSGKCTQTIDISFATGPMRSQRNIPLRNSVLLTKEPPAIGALQCFDAALATGTKDGIVRLWDLRSGKVVRMLEGHTDAITSLQFDSVNLVTGAMDRSIRIWDLRTGILSDVFAYEQPITSLHFDLDKIVISNNEPTVKIYNRKDGNHWFCGEDDPEQGNVDFVRYKHGYLVEGRSNGDINTWAI</sequence>
<accession>Q6CJ50</accession>
<proteinExistence type="inferred from homology"/>
<protein>
    <recommendedName>
        <fullName>Mitochondrial division protein 1</fullName>
    </recommendedName>
</protein>